<proteinExistence type="inferred from homology"/>
<dbReference type="EMBL" id="AE002160">
    <property type="protein sequence ID" value="AAF38948.1"/>
    <property type="molecule type" value="Genomic_DNA"/>
</dbReference>
<dbReference type="PIR" id="F81744">
    <property type="entry name" value="F81744"/>
</dbReference>
<dbReference type="RefSeq" id="WP_010229262.1">
    <property type="nucleotide sequence ID" value="NZ_CP063055.1"/>
</dbReference>
<dbReference type="SMR" id="Q9PLN6"/>
<dbReference type="GeneID" id="1245592"/>
<dbReference type="KEGG" id="cmu:TC_0063"/>
<dbReference type="eggNOG" id="COG1392">
    <property type="taxonomic scope" value="Bacteria"/>
</dbReference>
<dbReference type="HOGENOM" id="CLU_104916_0_1_0"/>
<dbReference type="OrthoDB" id="9780540at2"/>
<dbReference type="Proteomes" id="UP000000800">
    <property type="component" value="Chromosome"/>
</dbReference>
<dbReference type="Gene3D" id="1.20.58.220">
    <property type="entry name" value="Phosphate transport system protein phou homolog 2, domain 2"/>
    <property type="match status" value="1"/>
</dbReference>
<dbReference type="InterPro" id="IPR002727">
    <property type="entry name" value="DUF47"/>
</dbReference>
<dbReference type="InterPro" id="IPR038078">
    <property type="entry name" value="PhoU-like_sf"/>
</dbReference>
<dbReference type="InterPro" id="IPR018445">
    <property type="entry name" value="Put_Phosphate_transp_reg"/>
</dbReference>
<dbReference type="NCBIfam" id="TIGR00153">
    <property type="entry name" value="TIGR00153 family protein"/>
    <property type="match status" value="1"/>
</dbReference>
<dbReference type="PANTHER" id="PTHR36536">
    <property type="entry name" value="UPF0111 PROTEIN HI_1603"/>
    <property type="match status" value="1"/>
</dbReference>
<dbReference type="PANTHER" id="PTHR36536:SF3">
    <property type="entry name" value="UPF0111 PROTEIN HI_1603"/>
    <property type="match status" value="1"/>
</dbReference>
<dbReference type="Pfam" id="PF01865">
    <property type="entry name" value="PhoU_div"/>
    <property type="match status" value="1"/>
</dbReference>
<dbReference type="SUPFAM" id="SSF109755">
    <property type="entry name" value="PhoU-like"/>
    <property type="match status" value="1"/>
</dbReference>
<accession>Q9PLN6</accession>
<name>Y063_CHLMU</name>
<reference key="1">
    <citation type="journal article" date="2000" name="Nucleic Acids Res.">
        <title>Genome sequences of Chlamydia trachomatis MoPn and Chlamydia pneumoniae AR39.</title>
        <authorList>
            <person name="Read T.D."/>
            <person name="Brunham R.C."/>
            <person name="Shen C."/>
            <person name="Gill S.R."/>
            <person name="Heidelberg J.F."/>
            <person name="White O."/>
            <person name="Hickey E.K."/>
            <person name="Peterson J.D."/>
            <person name="Utterback T.R."/>
            <person name="Berry K.J."/>
            <person name="Bass S."/>
            <person name="Linher K.D."/>
            <person name="Weidman J.F."/>
            <person name="Khouri H.M."/>
            <person name="Craven B."/>
            <person name="Bowman C."/>
            <person name="Dodson R.J."/>
            <person name="Gwinn M.L."/>
            <person name="Nelson W.C."/>
            <person name="DeBoy R.T."/>
            <person name="Kolonay J.F."/>
            <person name="McClarty G."/>
            <person name="Salzberg S.L."/>
            <person name="Eisen J.A."/>
            <person name="Fraser C.M."/>
        </authorList>
    </citation>
    <scope>NUCLEOTIDE SEQUENCE [LARGE SCALE GENOMIC DNA]</scope>
    <source>
        <strain>MoPn / Nigg</strain>
    </source>
</reference>
<comment type="similarity">
    <text evidence="1">Belongs to the UPF0111 family.</text>
</comment>
<evidence type="ECO:0000305" key="1"/>
<protein>
    <recommendedName>
        <fullName>UPF0111 protein TC_0063</fullName>
    </recommendedName>
</protein>
<organism>
    <name type="scientific">Chlamydia muridarum (strain MoPn / Nigg)</name>
    <dbReference type="NCBI Taxonomy" id="243161"/>
    <lineage>
        <taxon>Bacteria</taxon>
        <taxon>Pseudomonadati</taxon>
        <taxon>Chlamydiota</taxon>
        <taxon>Chlamydiia</taxon>
        <taxon>Chlamydiales</taxon>
        <taxon>Chlamydiaceae</taxon>
        <taxon>Chlamydia/Chlamydophila group</taxon>
        <taxon>Chlamydia</taxon>
    </lineage>
</organism>
<sequence>MQVLASLFGRSPFSPLQAHVELVSASIEVLFPLFSAIKEGDYQRVEALAQLVSSKERQADGVKNDIRSHLASGVFIPVSRLAMLEIISTQDSVADCAEDIAILLTVKELRFYPEFEEIFFQFLQKTVQSFEVVAKAIREMDLLLESSFGGCRAEKTRVLVNEVSNLEHECDLLQRELMKILFSENFSIETKDFVLWTQIIKRLSGISNNSEKLAYRVGMTLEEK</sequence>
<feature type="chain" id="PRO_0000154906" description="UPF0111 protein TC_0063">
    <location>
        <begin position="1"/>
        <end position="224"/>
    </location>
</feature>
<gene>
    <name type="ordered locus">TC_0063</name>
</gene>